<evidence type="ECO:0000255" key="1">
    <source>
        <dbReference type="HAMAP-Rule" id="MF_01681"/>
    </source>
</evidence>
<sequence length="225" mass="25070">MGIRAIVVDTAGTTTDLNFIEEILFPYSAKALPAFLEENQHNVLVENCICDVQDIALEPDASLARVTEILLQWIKEDRKATPLKTIQGLIWKQGYANGEFKGHIFPDFIEALDGYKQQGLRVYSFSSGSVEAQKLLFSHSDAGDLNDKFNGHFDTRTGNKRFKQAYCNIVNTISLSPKQILFVSDVLEELKAASEAGLNVVQMVRDDSQRTGDFKTISSFAELSI</sequence>
<gene>
    <name evidence="1" type="primary">mtnC</name>
    <name type="ordered locus">Shal_0067</name>
</gene>
<protein>
    <recommendedName>
        <fullName evidence="1">Enolase-phosphatase E1</fullName>
        <ecNumber evidence="1">3.1.3.77</ecNumber>
    </recommendedName>
    <alternativeName>
        <fullName evidence="1">2,3-diketo-5-methylthio-1-phosphopentane phosphatase</fullName>
    </alternativeName>
</protein>
<dbReference type="EC" id="3.1.3.77" evidence="1"/>
<dbReference type="EMBL" id="CP000931">
    <property type="protein sequence ID" value="ABZ74643.1"/>
    <property type="molecule type" value="Genomic_DNA"/>
</dbReference>
<dbReference type="RefSeq" id="WP_012275200.1">
    <property type="nucleotide sequence ID" value="NC_010334.1"/>
</dbReference>
<dbReference type="SMR" id="B0TM50"/>
<dbReference type="STRING" id="458817.Shal_0067"/>
<dbReference type="KEGG" id="shl:Shal_0067"/>
<dbReference type="eggNOG" id="COG4229">
    <property type="taxonomic scope" value="Bacteria"/>
</dbReference>
<dbReference type="HOGENOM" id="CLU_023273_0_0_6"/>
<dbReference type="OrthoDB" id="9797416at2"/>
<dbReference type="UniPathway" id="UPA00904">
    <property type="reaction ID" value="UER00876"/>
</dbReference>
<dbReference type="UniPathway" id="UPA00904">
    <property type="reaction ID" value="UER00877"/>
</dbReference>
<dbReference type="Proteomes" id="UP000001317">
    <property type="component" value="Chromosome"/>
</dbReference>
<dbReference type="GO" id="GO:0043715">
    <property type="term" value="F:2,3-diketo-5-methylthiopentyl-1-phosphate enolase activity"/>
    <property type="evidence" value="ECO:0007669"/>
    <property type="project" value="UniProtKB-UniRule"/>
</dbReference>
<dbReference type="GO" id="GO:0043716">
    <property type="term" value="F:2-hydroxy-3-keto-5-methylthiopentenyl-1-phosphate phosphatase activity"/>
    <property type="evidence" value="ECO:0007669"/>
    <property type="project" value="UniProtKB-UniRule"/>
</dbReference>
<dbReference type="GO" id="GO:0043874">
    <property type="term" value="F:acireductone synthase activity"/>
    <property type="evidence" value="ECO:0007669"/>
    <property type="project" value="UniProtKB-EC"/>
</dbReference>
<dbReference type="GO" id="GO:0000287">
    <property type="term" value="F:magnesium ion binding"/>
    <property type="evidence" value="ECO:0007669"/>
    <property type="project" value="UniProtKB-UniRule"/>
</dbReference>
<dbReference type="GO" id="GO:0019509">
    <property type="term" value="P:L-methionine salvage from methylthioadenosine"/>
    <property type="evidence" value="ECO:0007669"/>
    <property type="project" value="UniProtKB-UniRule"/>
</dbReference>
<dbReference type="CDD" id="cd01629">
    <property type="entry name" value="HAD_EP"/>
    <property type="match status" value="1"/>
</dbReference>
<dbReference type="FunFam" id="1.10.720.60:FF:000008">
    <property type="entry name" value="Enolase-phosphatase E1"/>
    <property type="match status" value="1"/>
</dbReference>
<dbReference type="Gene3D" id="1.10.720.60">
    <property type="match status" value="1"/>
</dbReference>
<dbReference type="Gene3D" id="3.40.50.1000">
    <property type="entry name" value="HAD superfamily/HAD-like"/>
    <property type="match status" value="1"/>
</dbReference>
<dbReference type="HAMAP" id="MF_01681">
    <property type="entry name" value="Salvage_MtnC"/>
    <property type="match status" value="1"/>
</dbReference>
<dbReference type="InterPro" id="IPR023943">
    <property type="entry name" value="Enolase-ppase_E1"/>
</dbReference>
<dbReference type="InterPro" id="IPR036412">
    <property type="entry name" value="HAD-like_sf"/>
</dbReference>
<dbReference type="InterPro" id="IPR006439">
    <property type="entry name" value="HAD-SF_hydro_IA"/>
</dbReference>
<dbReference type="InterPro" id="IPR023214">
    <property type="entry name" value="HAD_sf"/>
</dbReference>
<dbReference type="NCBIfam" id="TIGR01691">
    <property type="entry name" value="enolase-ppase"/>
    <property type="match status" value="1"/>
</dbReference>
<dbReference type="NCBIfam" id="TIGR01549">
    <property type="entry name" value="HAD-SF-IA-v1"/>
    <property type="match status" value="1"/>
</dbReference>
<dbReference type="PANTHER" id="PTHR20371">
    <property type="entry name" value="ENOLASE-PHOSPHATASE E1"/>
    <property type="match status" value="1"/>
</dbReference>
<dbReference type="PANTHER" id="PTHR20371:SF1">
    <property type="entry name" value="ENOLASE-PHOSPHATASE E1"/>
    <property type="match status" value="1"/>
</dbReference>
<dbReference type="Pfam" id="PF00702">
    <property type="entry name" value="Hydrolase"/>
    <property type="match status" value="1"/>
</dbReference>
<dbReference type="PRINTS" id="PR00413">
    <property type="entry name" value="HADHALOGNASE"/>
</dbReference>
<dbReference type="SFLD" id="SFLDF00044">
    <property type="entry name" value="enolase-phosphatase"/>
    <property type="match status" value="1"/>
</dbReference>
<dbReference type="SFLD" id="SFLDS00003">
    <property type="entry name" value="Haloacid_Dehalogenase"/>
    <property type="match status" value="1"/>
</dbReference>
<dbReference type="SUPFAM" id="SSF56784">
    <property type="entry name" value="HAD-like"/>
    <property type="match status" value="1"/>
</dbReference>
<name>MTNC_SHEHH</name>
<feature type="chain" id="PRO_0000357402" description="Enolase-phosphatase E1">
    <location>
        <begin position="1"/>
        <end position="225"/>
    </location>
</feature>
<organism>
    <name type="scientific">Shewanella halifaxensis (strain HAW-EB4)</name>
    <dbReference type="NCBI Taxonomy" id="458817"/>
    <lineage>
        <taxon>Bacteria</taxon>
        <taxon>Pseudomonadati</taxon>
        <taxon>Pseudomonadota</taxon>
        <taxon>Gammaproteobacteria</taxon>
        <taxon>Alteromonadales</taxon>
        <taxon>Shewanellaceae</taxon>
        <taxon>Shewanella</taxon>
    </lineage>
</organism>
<accession>B0TM50</accession>
<comment type="function">
    <text evidence="1">Bifunctional enzyme that catalyzes the enolization of 2,3-diketo-5-methylthiopentyl-1-phosphate (DK-MTP-1-P) into the intermediate 2-hydroxy-3-keto-5-methylthiopentenyl-1-phosphate (HK-MTPenyl-1-P), which is then dephosphorylated to form the acireductone 1,2-dihydroxy-3-keto-5-methylthiopentene (DHK-MTPene).</text>
</comment>
<comment type="catalytic activity">
    <reaction evidence="1">
        <text>5-methylsulfanyl-2,3-dioxopentyl phosphate + H2O = 1,2-dihydroxy-5-(methylsulfanyl)pent-1-en-3-one + phosphate</text>
        <dbReference type="Rhea" id="RHEA:21700"/>
        <dbReference type="ChEBI" id="CHEBI:15377"/>
        <dbReference type="ChEBI" id="CHEBI:43474"/>
        <dbReference type="ChEBI" id="CHEBI:49252"/>
        <dbReference type="ChEBI" id="CHEBI:58828"/>
        <dbReference type="EC" id="3.1.3.77"/>
    </reaction>
</comment>
<comment type="cofactor">
    <cofactor evidence="1">
        <name>Mg(2+)</name>
        <dbReference type="ChEBI" id="CHEBI:18420"/>
    </cofactor>
    <text evidence="1">Binds 1 Mg(2+) ion per subunit.</text>
</comment>
<comment type="pathway">
    <text evidence="1">Amino-acid biosynthesis; L-methionine biosynthesis via salvage pathway; L-methionine from S-methyl-5-thio-alpha-D-ribose 1-phosphate: step 3/6.</text>
</comment>
<comment type="pathway">
    <text evidence="1">Amino-acid biosynthesis; L-methionine biosynthesis via salvage pathway; L-methionine from S-methyl-5-thio-alpha-D-ribose 1-phosphate: step 4/6.</text>
</comment>
<comment type="subunit">
    <text evidence="1">Monomer.</text>
</comment>
<comment type="similarity">
    <text evidence="1">Belongs to the HAD-like hydrolase superfamily. MasA/MtnC family.</text>
</comment>
<reference key="1">
    <citation type="submission" date="2008-01" db="EMBL/GenBank/DDBJ databases">
        <title>Complete sequence of Shewanella halifaxensis HAW-EB4.</title>
        <authorList>
            <consortium name="US DOE Joint Genome Institute"/>
            <person name="Copeland A."/>
            <person name="Lucas S."/>
            <person name="Lapidus A."/>
            <person name="Glavina del Rio T."/>
            <person name="Dalin E."/>
            <person name="Tice H."/>
            <person name="Bruce D."/>
            <person name="Goodwin L."/>
            <person name="Pitluck S."/>
            <person name="Sims D."/>
            <person name="Brettin T."/>
            <person name="Detter J.C."/>
            <person name="Han C."/>
            <person name="Kuske C.R."/>
            <person name="Schmutz J."/>
            <person name="Larimer F."/>
            <person name="Land M."/>
            <person name="Hauser L."/>
            <person name="Kyrpides N."/>
            <person name="Kim E."/>
            <person name="Zhao J.-S."/>
            <person name="Richardson P."/>
        </authorList>
    </citation>
    <scope>NUCLEOTIDE SEQUENCE [LARGE SCALE GENOMIC DNA]</scope>
    <source>
        <strain>HAW-EB4</strain>
    </source>
</reference>
<keyword id="KW-0028">Amino-acid biosynthesis</keyword>
<keyword id="KW-0378">Hydrolase</keyword>
<keyword id="KW-0460">Magnesium</keyword>
<keyword id="KW-0479">Metal-binding</keyword>
<keyword id="KW-0486">Methionine biosynthesis</keyword>
<proteinExistence type="inferred from homology"/>